<keyword id="KW-0056">Arginine metabolism</keyword>
<keyword id="KW-0520">NAD</keyword>
<keyword id="KW-0560">Oxidoreductase</keyword>
<keyword id="KW-1185">Reference proteome</keyword>
<comment type="function">
    <text evidence="1">Catalyzes the NAD-dependent reduction of succinylglutamate semialdehyde into succinylglutamate.</text>
</comment>
<comment type="catalytic activity">
    <reaction evidence="1">
        <text>N-succinyl-L-glutamate 5-semialdehyde + NAD(+) + H2O = N-succinyl-L-glutamate + NADH + 2 H(+)</text>
        <dbReference type="Rhea" id="RHEA:10812"/>
        <dbReference type="ChEBI" id="CHEBI:15377"/>
        <dbReference type="ChEBI" id="CHEBI:15378"/>
        <dbReference type="ChEBI" id="CHEBI:57540"/>
        <dbReference type="ChEBI" id="CHEBI:57945"/>
        <dbReference type="ChEBI" id="CHEBI:58520"/>
        <dbReference type="ChEBI" id="CHEBI:58763"/>
        <dbReference type="EC" id="1.2.1.71"/>
    </reaction>
</comment>
<comment type="pathway">
    <text evidence="1">Amino-acid degradation; L-arginine degradation via AST pathway; L-glutamate and succinate from L-arginine: step 4/5.</text>
</comment>
<comment type="similarity">
    <text evidence="1">Belongs to the aldehyde dehydrogenase family. AstD subfamily.</text>
</comment>
<reference key="1">
    <citation type="journal article" date="2001" name="Proc. Natl. Acad. Sci. U.S.A.">
        <title>Complete genome sequence of Caulobacter crescentus.</title>
        <authorList>
            <person name="Nierman W.C."/>
            <person name="Feldblyum T.V."/>
            <person name="Laub M.T."/>
            <person name="Paulsen I.T."/>
            <person name="Nelson K.E."/>
            <person name="Eisen J.A."/>
            <person name="Heidelberg J.F."/>
            <person name="Alley M.R.K."/>
            <person name="Ohta N."/>
            <person name="Maddock J.R."/>
            <person name="Potocka I."/>
            <person name="Nelson W.C."/>
            <person name="Newton A."/>
            <person name="Stephens C."/>
            <person name="Phadke N.D."/>
            <person name="Ely B."/>
            <person name="DeBoy R.T."/>
            <person name="Dodson R.J."/>
            <person name="Durkin A.S."/>
            <person name="Gwinn M.L."/>
            <person name="Haft D.H."/>
            <person name="Kolonay J.F."/>
            <person name="Smit J."/>
            <person name="Craven M.B."/>
            <person name="Khouri H.M."/>
            <person name="Shetty J."/>
            <person name="Berry K.J."/>
            <person name="Utterback T.R."/>
            <person name="Tran K."/>
            <person name="Wolf A.M."/>
            <person name="Vamathevan J.J."/>
            <person name="Ermolaeva M.D."/>
            <person name="White O."/>
            <person name="Salzberg S.L."/>
            <person name="Venter J.C."/>
            <person name="Shapiro L."/>
            <person name="Fraser C.M."/>
        </authorList>
    </citation>
    <scope>NUCLEOTIDE SEQUENCE [LARGE SCALE GENOMIC DNA]</scope>
    <source>
        <strain>ATCC 19089 / CIP 103742 / CB 15</strain>
    </source>
</reference>
<dbReference type="EC" id="1.2.1.71" evidence="1"/>
<dbReference type="EMBL" id="AE005673">
    <property type="protein sequence ID" value="AAK23586.1"/>
    <property type="molecule type" value="Genomic_DNA"/>
</dbReference>
<dbReference type="PIR" id="F87448">
    <property type="entry name" value="F87448"/>
</dbReference>
<dbReference type="RefSeq" id="NP_420418.1">
    <property type="nucleotide sequence ID" value="NC_002696.2"/>
</dbReference>
<dbReference type="RefSeq" id="WP_010919481.1">
    <property type="nucleotide sequence ID" value="NC_002696.2"/>
</dbReference>
<dbReference type="SMR" id="Q9A7W2"/>
<dbReference type="STRING" id="190650.CC_1607"/>
<dbReference type="EnsemblBacteria" id="AAK23586">
    <property type="protein sequence ID" value="AAK23586"/>
    <property type="gene ID" value="CC_1607"/>
</dbReference>
<dbReference type="KEGG" id="ccr:CC_1607"/>
<dbReference type="PATRIC" id="fig|190650.5.peg.1634"/>
<dbReference type="eggNOG" id="COG1012">
    <property type="taxonomic scope" value="Bacteria"/>
</dbReference>
<dbReference type="HOGENOM" id="CLU_005391_1_0_5"/>
<dbReference type="BioCyc" id="CAULO:CC1607-MONOMER"/>
<dbReference type="UniPathway" id="UPA00185">
    <property type="reaction ID" value="UER00282"/>
</dbReference>
<dbReference type="Proteomes" id="UP000001816">
    <property type="component" value="Chromosome"/>
</dbReference>
<dbReference type="GO" id="GO:0043824">
    <property type="term" value="F:succinylglutamate-semialdehyde dehydrogenase activity"/>
    <property type="evidence" value="ECO:0007669"/>
    <property type="project" value="UniProtKB-EC"/>
</dbReference>
<dbReference type="GO" id="GO:0019544">
    <property type="term" value="P:arginine catabolic process to glutamate"/>
    <property type="evidence" value="ECO:0007669"/>
    <property type="project" value="UniProtKB-UniRule"/>
</dbReference>
<dbReference type="GO" id="GO:0019545">
    <property type="term" value="P:arginine catabolic process to succinate"/>
    <property type="evidence" value="ECO:0007669"/>
    <property type="project" value="UniProtKB-UniRule"/>
</dbReference>
<dbReference type="CDD" id="cd07095">
    <property type="entry name" value="ALDH_SGSD_AstD"/>
    <property type="match status" value="1"/>
</dbReference>
<dbReference type="FunFam" id="3.40.605.10:FF:000010">
    <property type="entry name" value="N-succinylglutamate 5-semialdehyde dehydrogenase"/>
    <property type="match status" value="1"/>
</dbReference>
<dbReference type="Gene3D" id="3.40.605.10">
    <property type="entry name" value="Aldehyde Dehydrogenase, Chain A, domain 1"/>
    <property type="match status" value="1"/>
</dbReference>
<dbReference type="Gene3D" id="3.40.309.10">
    <property type="entry name" value="Aldehyde Dehydrogenase, Chain A, domain 2"/>
    <property type="match status" value="1"/>
</dbReference>
<dbReference type="HAMAP" id="MF_01174">
    <property type="entry name" value="Aldedh_AstD"/>
    <property type="match status" value="1"/>
</dbReference>
<dbReference type="InterPro" id="IPR016161">
    <property type="entry name" value="Ald_DH/histidinol_DH"/>
</dbReference>
<dbReference type="InterPro" id="IPR016163">
    <property type="entry name" value="Ald_DH_C"/>
</dbReference>
<dbReference type="InterPro" id="IPR016160">
    <property type="entry name" value="Ald_DH_CS_CYS"/>
</dbReference>
<dbReference type="InterPro" id="IPR029510">
    <property type="entry name" value="Ald_DH_CS_GLU"/>
</dbReference>
<dbReference type="InterPro" id="IPR016162">
    <property type="entry name" value="Ald_DH_N"/>
</dbReference>
<dbReference type="InterPro" id="IPR015590">
    <property type="entry name" value="Aldehyde_DH_dom"/>
</dbReference>
<dbReference type="InterPro" id="IPR017649">
    <property type="entry name" value="SuccinylGlu_semiald_DH_AstD"/>
</dbReference>
<dbReference type="NCBIfam" id="TIGR03240">
    <property type="entry name" value="arg_catab_astD"/>
    <property type="match status" value="1"/>
</dbReference>
<dbReference type="NCBIfam" id="NF006992">
    <property type="entry name" value="PRK09457.1"/>
    <property type="match status" value="1"/>
</dbReference>
<dbReference type="PANTHER" id="PTHR11699">
    <property type="entry name" value="ALDEHYDE DEHYDROGENASE-RELATED"/>
    <property type="match status" value="1"/>
</dbReference>
<dbReference type="Pfam" id="PF00171">
    <property type="entry name" value="Aldedh"/>
    <property type="match status" value="1"/>
</dbReference>
<dbReference type="SUPFAM" id="SSF53720">
    <property type="entry name" value="ALDH-like"/>
    <property type="match status" value="1"/>
</dbReference>
<dbReference type="PROSITE" id="PS00070">
    <property type="entry name" value="ALDEHYDE_DEHYDR_CYS"/>
    <property type="match status" value="1"/>
</dbReference>
<dbReference type="PROSITE" id="PS00687">
    <property type="entry name" value="ALDEHYDE_DEHYDR_GLU"/>
    <property type="match status" value="1"/>
</dbReference>
<organism>
    <name type="scientific">Caulobacter vibrioides (strain ATCC 19089 / CIP 103742 / CB 15)</name>
    <name type="common">Caulobacter crescentus</name>
    <dbReference type="NCBI Taxonomy" id="190650"/>
    <lineage>
        <taxon>Bacteria</taxon>
        <taxon>Pseudomonadati</taxon>
        <taxon>Pseudomonadota</taxon>
        <taxon>Alphaproteobacteria</taxon>
        <taxon>Caulobacterales</taxon>
        <taxon>Caulobacteraceae</taxon>
        <taxon>Caulobacter</taxon>
    </lineage>
</organism>
<feature type="chain" id="PRO_0000262395" description="N-succinylglutamate 5-semialdehyde dehydrogenase 2">
    <location>
        <begin position="1"/>
        <end position="485"/>
    </location>
</feature>
<feature type="active site" evidence="1">
    <location>
        <position position="244"/>
    </location>
</feature>
<feature type="active site" evidence="1">
    <location>
        <position position="279"/>
    </location>
</feature>
<feature type="binding site" evidence="1">
    <location>
        <begin position="221"/>
        <end position="226"/>
    </location>
    <ligand>
        <name>NAD(+)</name>
        <dbReference type="ChEBI" id="CHEBI:57540"/>
    </ligand>
</feature>
<protein>
    <recommendedName>
        <fullName evidence="1">N-succinylglutamate 5-semialdehyde dehydrogenase 2</fullName>
        <ecNumber evidence="1">1.2.1.71</ecNumber>
    </recommendedName>
    <alternativeName>
        <fullName evidence="1">Succinylglutamic semialdehyde dehydrogenase 2</fullName>
        <shortName evidence="1">SGSD 2</shortName>
    </alternativeName>
</protein>
<proteinExistence type="inferred from homology"/>
<sequence>MSGGLFIDGKWRAGQGAGLSSTDPATGEDVWSAATATPADVADAVAAARKAFPAWADRPREERIAILRRYKDILVERAAPYAEALSRETGKALWETRAELASMAGKVDLSIRAYDERTGVTENAMPFGRAVLRHRAHGVMAVLGPFNFPGHLPNGHIVPALLAGDTVVFKPSEETPLAGQLMVEALEAAGAPAGVVNLVQGGRETGQALIAQDIDGLLFTGSAAAGTYFRRYFADRPDVILALELGGNNPLVVWNADDAPEAVAALIVQSAFITTGQRCSCARRLIVPDDASGAAIIEATVALAERLVIGAWNAENEPFMGPLISGRAAKAAREVASATPGKTILALDGVAGLGDAFLKPGIVDVTGLETPDEELFAPLLQVRRVSSFDEALAAANATRYGLSAGLISNESELWDKFLSRIRAGVVNWNRPTTGAAGSMPFGGLGASGNHRPSAYYAADYCAYPVASFEASMVVDTLKDIKGLKA</sequence>
<name>ASTD2_CAUVC</name>
<evidence type="ECO:0000255" key="1">
    <source>
        <dbReference type="HAMAP-Rule" id="MF_01174"/>
    </source>
</evidence>
<gene>
    <name evidence="1" type="primary">astD2</name>
    <name type="ordered locus">CC_1607</name>
</gene>
<accession>Q9A7W2</accession>